<keyword id="KW-0002">3D-structure</keyword>
<keyword id="KW-1064">Adaptive immunity</keyword>
<keyword id="KW-1003">Cell membrane</keyword>
<keyword id="KW-1015">Disulfide bond</keyword>
<keyword id="KW-0325">Glycoprotein</keyword>
<keyword id="KW-0391">Immunity</keyword>
<keyword id="KW-0393">Immunoglobulin domain</keyword>
<keyword id="KW-0472">Membrane</keyword>
<keyword id="KW-1267">Proteomics identification</keyword>
<keyword id="KW-0675">Receptor</keyword>
<keyword id="KW-1185">Reference proteome</keyword>
<keyword id="KW-0732">Signal</keyword>
<keyword id="KW-1279">T cell receptor</keyword>
<dbReference type="EMBL" id="L36092">
    <property type="protein sequence ID" value="AAC80211.1"/>
    <property type="molecule type" value="Genomic_DNA"/>
</dbReference>
<dbReference type="EMBL" id="AC244472">
    <property type="status" value="NOT_ANNOTATED_CDS"/>
    <property type="molecule type" value="Genomic_DNA"/>
</dbReference>
<dbReference type="PDB" id="4ZDH">
    <property type="method" value="X-ray"/>
    <property type="resolution" value="2.10 A"/>
    <property type="chains" value="B=22-113"/>
</dbReference>
<dbReference type="PDB" id="6AT6">
    <property type="method" value="X-ray"/>
    <property type="resolution" value="1.42 A"/>
    <property type="chains" value="B=20-113"/>
</dbReference>
<dbReference type="PDB" id="6AVF">
    <property type="method" value="X-ray"/>
    <property type="resolution" value="2.03 A"/>
    <property type="chains" value="B=19-114"/>
</dbReference>
<dbReference type="PDBsum" id="4ZDH"/>
<dbReference type="PDBsum" id="6AT6"/>
<dbReference type="PDBsum" id="6AVF"/>
<dbReference type="SMR" id="A0A5B6"/>
<dbReference type="FunCoup" id="A0A5B6">
    <property type="interactions" value="406"/>
</dbReference>
<dbReference type="IMGT_GENE-DB" id="TRBV28"/>
<dbReference type="GlyCosmos" id="A0A5B6">
    <property type="glycosylation" value="1 site, No reported glycans"/>
</dbReference>
<dbReference type="GlyGen" id="A0A5B6">
    <property type="glycosylation" value="1 site"/>
</dbReference>
<dbReference type="BioMuta" id="TRBV28"/>
<dbReference type="MassIVE" id="A0A5B6"/>
<dbReference type="Ensembl" id="ENST00000390400.2">
    <property type="protein sequence ID" value="ENSP00000374923.2"/>
    <property type="gene ID" value="ENSG00000211753.4"/>
</dbReference>
<dbReference type="Ensembl" id="ENST00000619125.2">
    <property type="protein sequence ID" value="ENSP00000480928.2"/>
    <property type="gene ID" value="ENSG00000282812.1"/>
</dbReference>
<dbReference type="UCSC" id="uc033amv.2">
    <property type="organism name" value="human"/>
</dbReference>
<dbReference type="AGR" id="HGNC:12209"/>
<dbReference type="GeneCards" id="TRBV28"/>
<dbReference type="HGNC" id="HGNC:12209">
    <property type="gene designation" value="TRBV28"/>
</dbReference>
<dbReference type="HPA" id="ENSG00000211753">
    <property type="expression patterns" value="Tissue enriched (lymphoid)"/>
</dbReference>
<dbReference type="neXtProt" id="NX_A0A5B6"/>
<dbReference type="OpenTargets" id="ENSG00000211753"/>
<dbReference type="VEuPathDB" id="HostDB:ENSG00000211753"/>
<dbReference type="GeneTree" id="ENSGT00940000162480"/>
<dbReference type="HOGENOM" id="CLU_077975_9_2_1"/>
<dbReference type="InParanoid" id="A0A5B6"/>
<dbReference type="OMA" id="DMDHENM"/>
<dbReference type="OrthoDB" id="9803478at2759"/>
<dbReference type="PAN-GO" id="A0A5B6">
    <property type="GO annotations" value="2 GO annotations based on evolutionary models"/>
</dbReference>
<dbReference type="PhylomeDB" id="A0A5B6"/>
<dbReference type="ChiTaRS" id="TRBV28">
    <property type="organism name" value="human"/>
</dbReference>
<dbReference type="Pharos" id="A0A5B6">
    <property type="development level" value="Tdark"/>
</dbReference>
<dbReference type="PRO" id="PR:A0A5B6"/>
<dbReference type="Proteomes" id="UP000005640">
    <property type="component" value="Chromosome 7"/>
</dbReference>
<dbReference type="RNAct" id="A0A5B6">
    <property type="molecule type" value="protein"/>
</dbReference>
<dbReference type="Bgee" id="ENSG00000211753">
    <property type="expression patterns" value="Expressed in granulocyte and 87 other cell types or tissues"/>
</dbReference>
<dbReference type="GO" id="GO:0005886">
    <property type="term" value="C:plasma membrane"/>
    <property type="evidence" value="ECO:0000318"/>
    <property type="project" value="GO_Central"/>
</dbReference>
<dbReference type="GO" id="GO:0042101">
    <property type="term" value="C:T cell receptor complex"/>
    <property type="evidence" value="ECO:0007669"/>
    <property type="project" value="UniProtKB-KW"/>
</dbReference>
<dbReference type="GO" id="GO:0042605">
    <property type="term" value="F:peptide antigen binding"/>
    <property type="evidence" value="ECO:0007669"/>
    <property type="project" value="Ensembl"/>
</dbReference>
<dbReference type="GO" id="GO:0002250">
    <property type="term" value="P:adaptive immune response"/>
    <property type="evidence" value="ECO:0007669"/>
    <property type="project" value="UniProtKB-KW"/>
</dbReference>
<dbReference type="GO" id="GO:0007166">
    <property type="term" value="P:cell surface receptor signaling pathway"/>
    <property type="evidence" value="ECO:0000318"/>
    <property type="project" value="GO_Central"/>
</dbReference>
<dbReference type="CDD" id="cd05899">
    <property type="entry name" value="IgV_TCR_beta"/>
    <property type="match status" value="1"/>
</dbReference>
<dbReference type="Gene3D" id="2.60.40.10">
    <property type="entry name" value="Immunoglobulins"/>
    <property type="match status" value="1"/>
</dbReference>
<dbReference type="InterPro" id="IPR007110">
    <property type="entry name" value="Ig-like_dom"/>
</dbReference>
<dbReference type="InterPro" id="IPR036179">
    <property type="entry name" value="Ig-like_dom_sf"/>
</dbReference>
<dbReference type="InterPro" id="IPR013783">
    <property type="entry name" value="Ig-like_fold"/>
</dbReference>
<dbReference type="InterPro" id="IPR013106">
    <property type="entry name" value="Ig_V-set"/>
</dbReference>
<dbReference type="InterPro" id="IPR050413">
    <property type="entry name" value="TCR_beta_variable"/>
</dbReference>
<dbReference type="PANTHER" id="PTHR23268:SF121">
    <property type="entry name" value="T CELL RECEPTOR BETA VARIABLE 28"/>
    <property type="match status" value="1"/>
</dbReference>
<dbReference type="PANTHER" id="PTHR23268">
    <property type="entry name" value="T-CELL RECEPTOR BETA CHAIN"/>
    <property type="match status" value="1"/>
</dbReference>
<dbReference type="Pfam" id="PF07686">
    <property type="entry name" value="V-set"/>
    <property type="match status" value="1"/>
</dbReference>
<dbReference type="SUPFAM" id="SSF48726">
    <property type="entry name" value="Immunoglobulin"/>
    <property type="match status" value="1"/>
</dbReference>
<dbReference type="PROSITE" id="PS50835">
    <property type="entry name" value="IG_LIKE"/>
    <property type="match status" value="1"/>
</dbReference>
<name>TVB28_HUMAN</name>
<feature type="signal peptide" evidence="1">
    <location>
        <begin position="1"/>
        <end position="26"/>
    </location>
</feature>
<feature type="chain" id="PRO_5014564939" description="T cell receptor beta variable 28" evidence="1">
    <location>
        <begin position="27"/>
        <end position="114"/>
    </location>
</feature>
<feature type="domain" description="Ig-like" evidence="2">
    <location>
        <begin position="27"/>
        <end position="114" status="greater than"/>
    </location>
</feature>
<feature type="glycosylation site" description="N-linked (GlcNAc...) asparagine" evidence="3">
    <location>
        <position position="103"/>
    </location>
</feature>
<feature type="disulfide bond" evidence="2 4 13">
    <location>
        <begin position="42"/>
        <end position="110"/>
    </location>
</feature>
<feature type="non-terminal residue">
    <location>
        <position position="114"/>
    </location>
</feature>
<feature type="strand" evidence="14">
    <location>
        <begin position="23"/>
        <end position="26"/>
    </location>
</feature>
<feature type="strand" evidence="14">
    <location>
        <begin position="28"/>
        <end position="33"/>
    </location>
</feature>
<feature type="strand" evidence="14">
    <location>
        <begin position="38"/>
        <end position="44"/>
    </location>
</feature>
<feature type="strand" evidence="14">
    <location>
        <begin position="49"/>
        <end position="57"/>
    </location>
</feature>
<feature type="turn" evidence="14">
    <location>
        <begin position="58"/>
        <end position="60"/>
    </location>
</feature>
<feature type="strand" evidence="14">
    <location>
        <begin position="61"/>
        <end position="70"/>
    </location>
</feature>
<feature type="strand" evidence="14">
    <location>
        <begin position="84"/>
        <end position="86"/>
    </location>
</feature>
<feature type="strand" evidence="14">
    <location>
        <begin position="92"/>
        <end position="99"/>
    </location>
</feature>
<feature type="helix" evidence="14">
    <location>
        <begin position="102"/>
        <end position="104"/>
    </location>
</feature>
<feature type="strand" evidence="14">
    <location>
        <begin position="106"/>
        <end position="113"/>
    </location>
</feature>
<proteinExistence type="evidence at protein level"/>
<gene>
    <name evidence="11" type="primary">TRBV28</name>
    <name evidence="10" type="synonym">TCRBV3S1</name>
</gene>
<accession>A0A5B6</accession>
<accession>A0A0G2JN94</accession>
<sequence length="114" mass="13166">MGIRLLCRVAFCFLAVGLVDVKVTQSSRYLVKRTGEKVFLECVQDMDHENMFWYRQDPGLGLRLIYFSYDVKMKEKGDIPEGYSVSREKKERFSLILESASTNQTSMYLCASSL</sequence>
<evidence type="ECO:0000255" key="1"/>
<evidence type="ECO:0000255" key="2">
    <source>
        <dbReference type="PROSITE-ProRule" id="PRU00114"/>
    </source>
</evidence>
<evidence type="ECO:0000255" key="3">
    <source>
        <dbReference type="PROSITE-ProRule" id="PRU00498"/>
    </source>
</evidence>
<evidence type="ECO:0000269" key="4">
    <source ref="9"/>
</evidence>
<evidence type="ECO:0000303" key="5">
    <source>
    </source>
</evidence>
<evidence type="ECO:0000303" key="6">
    <source>
    </source>
</evidence>
<evidence type="ECO:0000303" key="7">
    <source>
    </source>
</evidence>
<evidence type="ECO:0000303" key="8">
    <source>
    </source>
</evidence>
<evidence type="ECO:0000303" key="9">
    <source>
    </source>
</evidence>
<evidence type="ECO:0000303" key="10">
    <source>
    </source>
</evidence>
<evidence type="ECO:0000303" key="11">
    <source ref="3"/>
</evidence>
<evidence type="ECO:0000305" key="12"/>
<evidence type="ECO:0007744" key="13">
    <source>
        <dbReference type="PDB" id="4ZDH"/>
    </source>
</evidence>
<evidence type="ECO:0007829" key="14">
    <source>
        <dbReference type="PDB" id="6AT6"/>
    </source>
</evidence>
<organism>
    <name type="scientific">Homo sapiens</name>
    <name type="common">Human</name>
    <dbReference type="NCBI Taxonomy" id="9606"/>
    <lineage>
        <taxon>Eukaryota</taxon>
        <taxon>Metazoa</taxon>
        <taxon>Chordata</taxon>
        <taxon>Craniata</taxon>
        <taxon>Vertebrata</taxon>
        <taxon>Euteleostomi</taxon>
        <taxon>Mammalia</taxon>
        <taxon>Eutheria</taxon>
        <taxon>Euarchontoglires</taxon>
        <taxon>Primates</taxon>
        <taxon>Haplorrhini</taxon>
        <taxon>Catarrhini</taxon>
        <taxon>Hominidae</taxon>
        <taxon>Homo</taxon>
    </lineage>
</organism>
<comment type="function">
    <text evidence="5 7 8 9">V region of the variable domain of T cell receptor (TR) beta chain that participates in the antigen recognition (PubMed:24600447). Alpha-beta T cell receptors are antigen specific receptors which are essential to the immune response and are present on the cell surface of T lymphocytes. Recognize peptide-major histocompatibility (MH) (pMH) complexes that are displayed by antigen presenting cells (APC), a prerequisite for efficient T cell adaptive immunity against pathogens (PubMed:25493333). Binding of alpha-beta TR to pMH complex initiates TR-CD3 clustering on the cell surface and intracellular activation of LCK that phosphorylates the ITAM motifs of CD3G, CD3D, CD3E and CD247 enabling the recruitment of ZAP70. In turn ZAP70 phosphorylates LAT, which recruits numerous signaling molecules to form the LAT signalosome. The LAT signalosome propagates signal branching to three major signaling pathways, the calcium, the mitogen-activated protein kinase (MAPK) kinase and the nuclear factor NF-kappa-B (NF-kB) pathways, leading to the mobilization of transcription factors that are critical for gene expression and essential for T cell growth and differentiation (PubMed:23524462). The T cell repertoire is generated in the thymus, by V-(D)-J rearrangement. This repertoire is then shaped by intrathymic selection events to generate a peripheral T cell pool of self-MH restricted, non-autoaggressive T cells. Post-thymic interaction of alpha-beta TR with the pMH complexes shapes TR structural and functional avidity (PubMed:15040585).</text>
</comment>
<comment type="subunit">
    <text evidence="6">Alpha-beta TR is a heterodimer composed of an alpha and beta chain; disulfide-linked. The alpha-beta TR is associated with the transmembrane signaling CD3 coreceptor proteins to form the TR-CD3 (TcR or TCR). The assembly of alpha-beta TR heterodimers with CD3 occurs in the endoplasmic reticulum where a single alpha-beta TR heterodimer associates with one CD3D-CD3E heterodimer, one CD3G-CD3E heterodimer and one CD247 homodimer forming a stable octameric structure. CD3D-CD3E and CD3G-CD3E heterodimers preferentially associate with TR alpha and TR beta chains, respectively. The association of the CD247 homodimer is the last step of TcR assembly in the endoplasmic reticulum and is required for transport to the cell surface.</text>
</comment>
<comment type="subcellular location">
    <subcellularLocation>
        <location evidence="6">Cell membrane</location>
    </subcellularLocation>
</comment>
<comment type="polymorphism">
    <text evidence="12">There are several alleles. The sequence shown is that of IMGT allele TRBV28*01.</text>
</comment>
<reference key="1">
    <citation type="journal article" date="1996" name="Science">
        <title>The complete 685-kilobase DNA sequence of the human beta T cell receptor locus.</title>
        <authorList>
            <person name="Rowen L."/>
            <person name="Koop B.F."/>
            <person name="Hood L."/>
        </authorList>
    </citation>
    <scope>NUCLEOTIDE SEQUENCE [GENOMIC DNA] (IMGT ALLELE TRBV28*01)</scope>
</reference>
<reference key="2">
    <citation type="journal article" date="2003" name="Nature">
        <title>The DNA sequence of human chromosome 7.</title>
        <authorList>
            <person name="Hillier L.W."/>
            <person name="Fulton R.S."/>
            <person name="Fulton L.A."/>
            <person name="Graves T.A."/>
            <person name="Pepin K.H."/>
            <person name="Wagner-McPherson C."/>
            <person name="Layman D."/>
            <person name="Maas J."/>
            <person name="Jaeger S."/>
            <person name="Walker R."/>
            <person name="Wylie K."/>
            <person name="Sekhon M."/>
            <person name="Becker M.C."/>
            <person name="O'Laughlin M.D."/>
            <person name="Schaller M.E."/>
            <person name="Fewell G.A."/>
            <person name="Delehaunty K.D."/>
            <person name="Miner T.L."/>
            <person name="Nash W.E."/>
            <person name="Cordes M."/>
            <person name="Du H."/>
            <person name="Sun H."/>
            <person name="Edwards J."/>
            <person name="Bradshaw-Cordum H."/>
            <person name="Ali J."/>
            <person name="Andrews S."/>
            <person name="Isak A."/>
            <person name="Vanbrunt A."/>
            <person name="Nguyen C."/>
            <person name="Du F."/>
            <person name="Lamar B."/>
            <person name="Courtney L."/>
            <person name="Kalicki J."/>
            <person name="Ozersky P."/>
            <person name="Bielicki L."/>
            <person name="Scott K."/>
            <person name="Holmes A."/>
            <person name="Harkins R."/>
            <person name="Harris A."/>
            <person name="Strong C.M."/>
            <person name="Hou S."/>
            <person name="Tomlinson C."/>
            <person name="Dauphin-Kohlberg S."/>
            <person name="Kozlowicz-Reilly A."/>
            <person name="Leonard S."/>
            <person name="Rohlfing T."/>
            <person name="Rock S.M."/>
            <person name="Tin-Wollam A.-M."/>
            <person name="Abbott A."/>
            <person name="Minx P."/>
            <person name="Maupin R."/>
            <person name="Strowmatt C."/>
            <person name="Latreille P."/>
            <person name="Miller N."/>
            <person name="Johnson D."/>
            <person name="Murray J."/>
            <person name="Woessner J.P."/>
            <person name="Wendl M.C."/>
            <person name="Yang S.-P."/>
            <person name="Schultz B.R."/>
            <person name="Wallis J.W."/>
            <person name="Spieth J."/>
            <person name="Bieri T.A."/>
            <person name="Nelson J.O."/>
            <person name="Berkowicz N."/>
            <person name="Wohldmann P.E."/>
            <person name="Cook L.L."/>
            <person name="Hickenbotham M.T."/>
            <person name="Eldred J."/>
            <person name="Williams D."/>
            <person name="Bedell J.A."/>
            <person name="Mardis E.R."/>
            <person name="Clifton S.W."/>
            <person name="Chissoe S.L."/>
            <person name="Marra M.A."/>
            <person name="Raymond C."/>
            <person name="Haugen E."/>
            <person name="Gillett W."/>
            <person name="Zhou Y."/>
            <person name="James R."/>
            <person name="Phelps K."/>
            <person name="Iadanoto S."/>
            <person name="Bubb K."/>
            <person name="Simms E."/>
            <person name="Levy R."/>
            <person name="Clendenning J."/>
            <person name="Kaul R."/>
            <person name="Kent W.J."/>
            <person name="Furey T.S."/>
            <person name="Baertsch R.A."/>
            <person name="Brent M.R."/>
            <person name="Keibler E."/>
            <person name="Flicek P."/>
            <person name="Bork P."/>
            <person name="Suyama M."/>
            <person name="Bailey J.A."/>
            <person name="Portnoy M.E."/>
            <person name="Torrents D."/>
            <person name="Chinwalla A.T."/>
            <person name="Gish W.R."/>
            <person name="Eddy S.R."/>
            <person name="McPherson J.D."/>
            <person name="Olson M.V."/>
            <person name="Eichler E.E."/>
            <person name="Green E.D."/>
            <person name="Waterston R.H."/>
            <person name="Wilson R.K."/>
        </authorList>
    </citation>
    <scope>NUCLEOTIDE SEQUENCE [LARGE SCALE GENOMIC DNA] (IMGT ALLELE TRBV28*01)</scope>
</reference>
<reference key="3">
    <citation type="book" date="2001" name="The T Cell Receptor FactsBook.">
        <title>The T Cell Receptor FactsBook.</title>
        <editorList>
            <person name="Lefranc M.P."/>
            <person name="Lefranc G."/>
        </editorList>
        <authorList>
            <person name="Lefranc M.P."/>
            <person name="Lefranc G."/>
        </authorList>
    </citation>
    <scope>NOMENCLATURE</scope>
</reference>
<reference key="4">
    <citation type="journal article" date="2004" name="Nat. Rev. Immunol.">
        <title>The many important facets of T-cell repertoire diversity.</title>
        <authorList>
            <person name="Nikolich-Zugich J."/>
            <person name="Slifka M.K."/>
            <person name="Messaoudi I."/>
        </authorList>
    </citation>
    <scope>REVIEW ON T CELL REPERTOIRE DIVERSITY</scope>
</reference>
<reference key="5">
    <citation type="journal article" date="2010" name="Cold Spring Harb. Perspect. Biol.">
        <title>Structural biology of the T-cell receptor: insights into receptor assembly, ligand recognition, and initiation of signaling.</title>
        <authorList>
            <person name="Wucherpfennig K.W."/>
            <person name="Gagnon E."/>
            <person name="Call M.J."/>
            <person name="Huseby E.S."/>
            <person name="Call M.E."/>
        </authorList>
    </citation>
    <scope>REVIEW ON T CELL RECEPTOR-CD3 COMPLEX ASSEMBLY</scope>
    <scope>SUBCELLULAR LOCATION</scope>
</reference>
<reference key="6">
    <citation type="journal article" date="2013" name="Nat. Rev. Immunol.">
        <title>T cell receptor signalling networks: branched, diversified and bounded.</title>
        <authorList>
            <person name="Brownlie R.J."/>
            <person name="Zamoyska R."/>
        </authorList>
    </citation>
    <scope>REVIEW ON T CELL RECEPTOR SIGNALING</scope>
</reference>
<reference key="7">
    <citation type="journal article" date="2014" name="Front. Immunol.">
        <title>Immunoglobulin and T Cell Receptor Genes: IMGT((R)) and the Birth and Rise of Immunoinformatics.</title>
        <authorList>
            <person name="Lefranc M.P."/>
        </authorList>
    </citation>
    <scope>NOMENCLATURE</scope>
</reference>
<reference key="8">
    <citation type="journal article" date="2015" name="Annu. Rev. Immunol.">
        <title>T cell antigen receptor recognition of antigen-presenting molecules.</title>
        <authorList>
            <person name="Rossjohn J."/>
            <person name="Gras S."/>
            <person name="Miles J.J."/>
            <person name="Turner S.J."/>
            <person name="Godfrey D.I."/>
            <person name="McCluskey J."/>
        </authorList>
    </citation>
    <scope>REVIEW ON FUNCTION</scope>
</reference>
<reference evidence="13" key="9">
    <citation type="submission" date="2015-04" db="PDB data bank">
        <title>Crystal structure of JKA6 TCR.</title>
        <authorList>
            <person name="Singh N.K."/>
            <person name="Hossain M."/>
            <person name="Baker B.M."/>
        </authorList>
    </citation>
    <scope>X-RAY CRYSTALLOGRAPHY (2.10 ANGSTROMS) OF 22-113</scope>
    <scope>DISULFIDE BONDS</scope>
</reference>
<protein>
    <recommendedName>
        <fullName evidence="11">T cell receptor beta variable 28</fullName>
    </recommendedName>
</protein>